<protein>
    <recommendedName>
        <fullName evidence="1">Peptide chain release factor 2</fullName>
        <shortName evidence="1">RF-2</shortName>
    </recommendedName>
</protein>
<sequence length="365" mass="41251">MFEINPVNNRIQDLTERSDVLRGYLDYDAKKERLEEVNAELEQPDVWNEPERAQALGKERSSLEAVVDTLDQMKQGLEDVSGLLELAVEADDEETFNEAVAELDALEEKLAQLEFRRMFSGEYDSADCYLDIQAGSGGTEAQDWASMLERMYLRWAESRGFKTEIIEESEGEVAGIKSVTIKISGDYAYGWLRTETGVHRLVRKSPFDSGGRRHTSFSSAFVYPEVDDDIDIEINPADLRIDVYRTSGAGGQHVNRTESAVRITHIPTGIVTQCQNDRSQHKNKDQAMKQMKAKLYELEMQKKNAEKQAMEDNKSDIGWGSQIRSYVLDDSRIKDLRTGVETRNTQAVLDGSLDQFIEASLKAGL</sequence>
<evidence type="ECO:0000255" key="1">
    <source>
        <dbReference type="HAMAP-Rule" id="MF_00094"/>
    </source>
</evidence>
<accession>C5A0G3</accession>
<name>RF2_ECOBW</name>
<organism>
    <name type="scientific">Escherichia coli (strain K12 / MC4100 / BW2952)</name>
    <dbReference type="NCBI Taxonomy" id="595496"/>
    <lineage>
        <taxon>Bacteria</taxon>
        <taxon>Pseudomonadati</taxon>
        <taxon>Pseudomonadota</taxon>
        <taxon>Gammaproteobacteria</taxon>
        <taxon>Enterobacterales</taxon>
        <taxon>Enterobacteriaceae</taxon>
        <taxon>Escherichia</taxon>
    </lineage>
</organism>
<feature type="chain" id="PRO_1000202709" description="Peptide chain release factor 2">
    <location>
        <begin position="1"/>
        <end position="365"/>
    </location>
</feature>
<feature type="modified residue" description="N5-methylglutamine" evidence="1">
    <location>
        <position position="252"/>
    </location>
</feature>
<comment type="function">
    <text evidence="1">Peptide chain release factor 2 directs the termination of translation in response to the peptide chain termination codons UGA and UAA.</text>
</comment>
<comment type="subcellular location">
    <subcellularLocation>
        <location evidence="1">Cytoplasm</location>
    </subcellularLocation>
</comment>
<comment type="PTM">
    <text evidence="1">Methylated by PrmC. Methylation increases the termination efficiency of RF2.</text>
</comment>
<comment type="similarity">
    <text evidence="1">Belongs to the prokaryotic/mitochondrial release factor family.</text>
</comment>
<dbReference type="EMBL" id="CP001396">
    <property type="protein sequence ID" value="ACR63983.1"/>
    <property type="molecule type" value="Genomic_DNA"/>
</dbReference>
<dbReference type="RefSeq" id="WP_010723217.1">
    <property type="nucleotide sequence ID" value="NC_012759.1"/>
</dbReference>
<dbReference type="SMR" id="C5A0G3"/>
<dbReference type="KEGG" id="ebw:BWG_2616"/>
<dbReference type="HOGENOM" id="CLU_220733_1_0_6"/>
<dbReference type="GO" id="GO:0005737">
    <property type="term" value="C:cytoplasm"/>
    <property type="evidence" value="ECO:0007669"/>
    <property type="project" value="UniProtKB-SubCell"/>
</dbReference>
<dbReference type="GO" id="GO:0016149">
    <property type="term" value="F:translation release factor activity, codon specific"/>
    <property type="evidence" value="ECO:0007669"/>
    <property type="project" value="UniProtKB-UniRule"/>
</dbReference>
<dbReference type="FunFam" id="1.20.58.410:FF:000001">
    <property type="entry name" value="Peptide chain release factor 2"/>
    <property type="match status" value="1"/>
</dbReference>
<dbReference type="FunFam" id="3.30.160.20:FF:000010">
    <property type="entry name" value="Peptide chain release factor 2"/>
    <property type="match status" value="1"/>
</dbReference>
<dbReference type="Gene3D" id="3.30.160.20">
    <property type="match status" value="1"/>
</dbReference>
<dbReference type="Gene3D" id="3.30.70.1660">
    <property type="match status" value="1"/>
</dbReference>
<dbReference type="Gene3D" id="1.20.58.410">
    <property type="entry name" value="Release factor"/>
    <property type="match status" value="1"/>
</dbReference>
<dbReference type="HAMAP" id="MF_00094">
    <property type="entry name" value="Rel_fac_2"/>
    <property type="match status" value="1"/>
</dbReference>
<dbReference type="InterPro" id="IPR005139">
    <property type="entry name" value="PCRF"/>
</dbReference>
<dbReference type="InterPro" id="IPR000352">
    <property type="entry name" value="Pep_chain_release_fac_I"/>
</dbReference>
<dbReference type="InterPro" id="IPR045853">
    <property type="entry name" value="Pep_chain_release_fac_I_sf"/>
</dbReference>
<dbReference type="InterPro" id="IPR004374">
    <property type="entry name" value="PrfB"/>
</dbReference>
<dbReference type="NCBIfam" id="TIGR00020">
    <property type="entry name" value="prfB"/>
    <property type="match status" value="1"/>
</dbReference>
<dbReference type="PANTHER" id="PTHR43116:SF3">
    <property type="entry name" value="CLASS I PEPTIDE CHAIN RELEASE FACTOR"/>
    <property type="match status" value="1"/>
</dbReference>
<dbReference type="PANTHER" id="PTHR43116">
    <property type="entry name" value="PEPTIDE CHAIN RELEASE FACTOR 2"/>
    <property type="match status" value="1"/>
</dbReference>
<dbReference type="Pfam" id="PF03462">
    <property type="entry name" value="PCRF"/>
    <property type="match status" value="1"/>
</dbReference>
<dbReference type="Pfam" id="PF00472">
    <property type="entry name" value="RF-1"/>
    <property type="match status" value="1"/>
</dbReference>
<dbReference type="SMART" id="SM00937">
    <property type="entry name" value="PCRF"/>
    <property type="match status" value="1"/>
</dbReference>
<dbReference type="SUPFAM" id="SSF75620">
    <property type="entry name" value="Release factor"/>
    <property type="match status" value="1"/>
</dbReference>
<dbReference type="PROSITE" id="PS00745">
    <property type="entry name" value="RF_PROK_I"/>
    <property type="match status" value="1"/>
</dbReference>
<reference key="1">
    <citation type="journal article" date="2009" name="J. Bacteriol.">
        <title>Genomic sequencing reveals regulatory mutations and recombinational events in the widely used MC4100 lineage of Escherichia coli K-12.</title>
        <authorList>
            <person name="Ferenci T."/>
            <person name="Zhou Z."/>
            <person name="Betteridge T."/>
            <person name="Ren Y."/>
            <person name="Liu Y."/>
            <person name="Feng L."/>
            <person name="Reeves P.R."/>
            <person name="Wang L."/>
        </authorList>
    </citation>
    <scope>NUCLEOTIDE SEQUENCE [LARGE SCALE GENOMIC DNA]</scope>
    <source>
        <strain>K12 / MC4100 / BW2952</strain>
    </source>
</reference>
<keyword id="KW-0963">Cytoplasm</keyword>
<keyword id="KW-0488">Methylation</keyword>
<keyword id="KW-0648">Protein biosynthesis</keyword>
<gene>
    <name evidence="1" type="primary">prfB</name>
    <name type="ordered locus">BWG_2616</name>
</gene>
<proteinExistence type="inferred from homology"/>